<sequence length="969" mass="109324">MSAGPGWEPCTKRPRWGAAGTSAPTASDSRSFPGRQRRVLDPKDAPVQFRVPPSSPACVSGRAGPHRGNATSFVFKQKTITTWMDTKGPKTAESESKENNNTRIDSMMSSVQKDNFYPHKVEKLENVPQLNLDKSPTEKSSQYLNQQQTASVCKWQNEGKHAEQLLASEPPAGTPLPKQLSNANIGQSPHTDDHSDTDHEEDRDNQQFLTPIKLANTKPTVGDGQARSNCKCSGSRQSVKDCTGCQQEEVDVLPESPLSDVGAEDIGTGPKNDNKLTGQESSLGDSPPFEKESEPESPMDVDNSKNSCQDSEADEETSPVFDEQDDRSSQTANKLSSCQAREADGDLRKRYLTKGSEVRLHFQFEGENNAGTSDLNAKPSGNSSSLNVECRSSKQHGKRDSKITDHFMRISKSEDRRKEQCEVRHQRTERKIPKYIPPNLPPEKKWLGTPIEEMRKMPRCGIHLPSLRPSASHTVTVRVDLLRAGEVPKPFPTHYKDLWDNKHVKMPCSEQNLYPVEDENGERTAGSRWELIQTALLNKFTRPQNLKDAILKYNVAYSKKWDFTALVDFWDKVLEEAEAQHLYQSILPDMVKIALCLPNICTQPIPLLKQKMNHSVTMSQEQIASLLANAFFCTFPRRNAKMKSEYSSYPDINFNRLFEGRSSRKPEKLKTLFCYFRRVTEKKPTGLVTFTRQSLEDFPEWERCEKPLTRLHVTYEGTIEGNGRGMLQVDFANRFVGGGVTGAGLVQEEIRFLINPELIVSRLFTEVLDHNECLIITGTEQYSEYTGYAETYRWARSHEDGSEKDDWQRRCTEIVAIDALHFRRYLDQFVPEKVRRELNKAYCGFLRPGVPSENLSAVATGNWGCGAFGGDARLKALIQILAAAAAERDVVYFTFGDSELMRDIYSMHTFLTERKLDVGKVYKLLLRYYNEECRNCSTPGPDIKLYPFIYHAVESSAETTDMPGQKAGT</sequence>
<proteinExistence type="evidence at protein level"/>
<name>PARG_MOUSE</name>
<comment type="function">
    <text evidence="1">Poly(ADP-ribose) glycohydrolase that degrades poly(ADP-ribose) by hydrolyzing the ribose-ribose bonds present in poly(ADP-ribose). PARG acts both as an endo- and exoglycosidase, releasing poly(ADP-ribose) of different length as well as ADP-ribose monomers. It is however unable to cleave the ester bond between the terminal ADP-ribose and ADP-ribosylated residues, leaving proteins that are mono-ADP-ribosylated. Poly(ADP-ribose) is synthesized after DNA damage is only present transiently and is rapidly degraded by PARG. Required to prevent detrimental accumulation of poly(ADP-ribose) upon prolonged replicative stress, while it is not required for recovery from transient replicative stress. Responsible for the prevalence of mono-ADP-ribosylated proteins in cells, thanks to its ability to degrade poly(ADP-ribose) without cleaving the terminal protein-ribose bond. Required for retinoid acid-dependent gene transactivation, probably by removing poly(ADP-ribose) from histone demethylase KDM4D, allowing chromatin derepression at RAR-dependent gene promoters. Involved in the synthesis of ATP in the nucleus, together with PARP1, NMNAT1 and NUDT5. Nuclear ATP generation is required for extensive chromatin remodeling events that are energy-consuming.</text>
</comment>
<comment type="catalytic activity">
    <reaction evidence="1">
        <text>[(1''-&gt;2')-ADP-alpha-D-ribose](n) + H2O = [(1''-&gt;2')-ADP-alpha-D-ribose](n-1) + ADP-D-ribose</text>
        <dbReference type="Rhea" id="RHEA:52216"/>
        <dbReference type="Rhea" id="RHEA-COMP:16922"/>
        <dbReference type="Rhea" id="RHEA-COMP:16923"/>
        <dbReference type="ChEBI" id="CHEBI:15377"/>
        <dbReference type="ChEBI" id="CHEBI:57967"/>
        <dbReference type="ChEBI" id="CHEBI:142512"/>
        <dbReference type="EC" id="3.2.1.143"/>
    </reaction>
</comment>
<comment type="subunit">
    <text evidence="1">Interacts with PCNA. Interacts with NUDT5.</text>
</comment>
<comment type="subcellular location">
    <subcellularLocation>
        <location evidence="1">Nucleus</location>
    </subcellularLocation>
    <text evidence="1">Colocalizes with PCNA at replication foci. Relocalizes to the cytoplasm in response to DNA damage (By similarity).</text>
</comment>
<comment type="alternative products">
    <event type="alternative splicing"/>
    <isoform>
        <id>O88622-1</id>
        <name>1</name>
        <sequence type="displayed"/>
    </isoform>
    <isoform>
        <id>O88622-2</id>
        <name>2</name>
        <sequence type="described" ref="VSP_011771 VSP_011772"/>
    </isoform>
</comment>
<comment type="domain">
    <text evidence="1">The PIP-box mediates interaction with PCNA and localization to replication foci.</text>
</comment>
<comment type="similarity">
    <text evidence="6">Belongs to the poly(ADP-ribose) glycohydrolase family.</text>
</comment>
<comment type="sequence caution" evidence="6">
    <conflict type="erroneous termination">
        <sequence resource="EMBL" id="BC050892"/>
    </conflict>
    <text>Truncated C-terminus.</text>
</comment>
<comment type="sequence caution" evidence="6">
    <conflict type="erroneous termination">
        <sequence resource="EMBL" id="BC059827"/>
    </conflict>
    <text>Truncated C-terminus.</text>
</comment>
<gene>
    <name evidence="4 7" type="primary">Parg</name>
</gene>
<dbReference type="EC" id="3.2.1.143" evidence="1"/>
<dbReference type="EMBL" id="AF079557">
    <property type="protein sequence ID" value="AAC28735.1"/>
    <property type="molecule type" value="mRNA"/>
</dbReference>
<dbReference type="EMBL" id="AK036656">
    <property type="protein sequence ID" value="BAC29519.1"/>
    <property type="molecule type" value="mRNA"/>
</dbReference>
<dbReference type="EMBL" id="BC050892">
    <property type="status" value="NOT_ANNOTATED_CDS"/>
    <property type="molecule type" value="mRNA"/>
</dbReference>
<dbReference type="EMBL" id="BC059827">
    <property type="status" value="NOT_ANNOTATED_CDS"/>
    <property type="molecule type" value="mRNA"/>
</dbReference>
<dbReference type="PDB" id="4FC2">
    <property type="method" value="X-ray"/>
    <property type="resolution" value="1.91 A"/>
    <property type="chains" value="A/B/C/D=439-959"/>
</dbReference>
<dbReference type="PDB" id="4N9Y">
    <property type="method" value="X-ray"/>
    <property type="resolution" value="2.30 A"/>
    <property type="chains" value="A=439-959"/>
</dbReference>
<dbReference type="PDB" id="4N9Z">
    <property type="method" value="X-ray"/>
    <property type="resolution" value="1.90 A"/>
    <property type="chains" value="A/B=439-959"/>
</dbReference>
<dbReference type="PDB" id="4NA0">
    <property type="method" value="X-ray"/>
    <property type="resolution" value="2.40 A"/>
    <property type="chains" value="A/B/C=439-959"/>
</dbReference>
<dbReference type="PDB" id="4NA4">
    <property type="method" value="X-ray"/>
    <property type="resolution" value="2.50 A"/>
    <property type="chains" value="A/B/C=439-959"/>
</dbReference>
<dbReference type="PDB" id="4NA5">
    <property type="method" value="X-ray"/>
    <property type="resolution" value="2.00 A"/>
    <property type="chains" value="A=439-959"/>
</dbReference>
<dbReference type="PDB" id="4NA6">
    <property type="method" value="X-ray"/>
    <property type="resolution" value="2.48 A"/>
    <property type="chains" value="A/B=439-959"/>
</dbReference>
<dbReference type="PDBsum" id="4FC2"/>
<dbReference type="PDBsum" id="4N9Y"/>
<dbReference type="PDBsum" id="4N9Z"/>
<dbReference type="PDBsum" id="4NA0"/>
<dbReference type="PDBsum" id="4NA4"/>
<dbReference type="PDBsum" id="4NA5"/>
<dbReference type="PDBsum" id="4NA6"/>
<dbReference type="SMR" id="O88622"/>
<dbReference type="FunCoup" id="O88622">
    <property type="interactions" value="4774"/>
</dbReference>
<dbReference type="IntAct" id="O88622">
    <property type="interactions" value="2"/>
</dbReference>
<dbReference type="STRING" id="10090.ENSMUSP00000022470"/>
<dbReference type="GlyGen" id="O88622">
    <property type="glycosylation" value="3 sites, 2 N-linked glycans (2 sites), 1 O-linked glycan (1 site)"/>
</dbReference>
<dbReference type="iPTMnet" id="O88622"/>
<dbReference type="PhosphoSitePlus" id="O88622"/>
<dbReference type="SwissPalm" id="O88622"/>
<dbReference type="jPOST" id="O88622"/>
<dbReference type="PaxDb" id="10090-ENSMUSP00000022470"/>
<dbReference type="PeptideAtlas" id="O88622"/>
<dbReference type="ProteomicsDB" id="287779">
    <molecule id="O88622-1"/>
</dbReference>
<dbReference type="ProteomicsDB" id="287780">
    <molecule id="O88622-2"/>
</dbReference>
<dbReference type="Pumba" id="O88622"/>
<dbReference type="Antibodypedia" id="44981">
    <property type="antibodies" value="243 antibodies from 27 providers"/>
</dbReference>
<dbReference type="Ensembl" id="ENSMUST00000163350.8">
    <molecule id="O88622-2"/>
    <property type="protein sequence ID" value="ENSMUSP00000131566.2"/>
    <property type="gene ID" value="ENSMUSG00000021911.17"/>
</dbReference>
<dbReference type="UCSC" id="uc007syp.1">
    <molecule id="O88622-1"/>
    <property type="organism name" value="mouse"/>
</dbReference>
<dbReference type="UCSC" id="uc007syq.1">
    <molecule id="O88622-2"/>
    <property type="organism name" value="mouse"/>
</dbReference>
<dbReference type="AGR" id="MGI:1347094"/>
<dbReference type="MGI" id="MGI:1347094">
    <property type="gene designation" value="Parg"/>
</dbReference>
<dbReference type="VEuPathDB" id="HostDB:ENSMUSG00000021911"/>
<dbReference type="eggNOG" id="KOG2064">
    <property type="taxonomic scope" value="Eukaryota"/>
</dbReference>
<dbReference type="GeneTree" id="ENSGT00390000003652"/>
<dbReference type="InParanoid" id="O88622"/>
<dbReference type="PhylomeDB" id="O88622"/>
<dbReference type="BRENDA" id="3.2.1.143">
    <property type="organism ID" value="3474"/>
</dbReference>
<dbReference type="Reactome" id="R-MMU-110362">
    <property type="pathway name" value="POLB-Dependent Long Patch Base Excision Repair"/>
</dbReference>
<dbReference type="ChiTaRS" id="Parg">
    <property type="organism name" value="mouse"/>
</dbReference>
<dbReference type="EvolutionaryTrace" id="O88622"/>
<dbReference type="PRO" id="PR:O88622"/>
<dbReference type="Proteomes" id="UP000000589">
    <property type="component" value="Chromosome 14"/>
</dbReference>
<dbReference type="RNAct" id="O88622">
    <property type="molecule type" value="protein"/>
</dbReference>
<dbReference type="Bgee" id="ENSMUSG00000021911">
    <property type="expression patterns" value="Expressed in metanephric ureteric bud and 266 other cell types or tissues"/>
</dbReference>
<dbReference type="ExpressionAtlas" id="O88622">
    <property type="expression patterns" value="baseline and differential"/>
</dbReference>
<dbReference type="GO" id="GO:0005829">
    <property type="term" value="C:cytosol"/>
    <property type="evidence" value="ECO:0000315"/>
    <property type="project" value="MGI"/>
</dbReference>
<dbReference type="GO" id="GO:0005634">
    <property type="term" value="C:nucleus"/>
    <property type="evidence" value="ECO:0000314"/>
    <property type="project" value="MGI"/>
</dbReference>
<dbReference type="GO" id="GO:0004649">
    <property type="term" value="F:poly(ADP-ribose) glycohydrolase activity"/>
    <property type="evidence" value="ECO:0000315"/>
    <property type="project" value="MGI"/>
</dbReference>
<dbReference type="GO" id="GO:1990966">
    <property type="term" value="P:ATP generation from poly-ADP-D-ribose"/>
    <property type="evidence" value="ECO:0000250"/>
    <property type="project" value="UniProtKB"/>
</dbReference>
<dbReference type="GO" id="GO:0005975">
    <property type="term" value="P:carbohydrate metabolic process"/>
    <property type="evidence" value="ECO:0007669"/>
    <property type="project" value="InterPro"/>
</dbReference>
<dbReference type="GO" id="GO:0016045">
    <property type="term" value="P:detection of bacterium"/>
    <property type="evidence" value="ECO:0000315"/>
    <property type="project" value="MGI"/>
</dbReference>
<dbReference type="GO" id="GO:0006974">
    <property type="term" value="P:DNA damage response"/>
    <property type="evidence" value="ECO:0000315"/>
    <property type="project" value="MGI"/>
</dbReference>
<dbReference type="GO" id="GO:0006282">
    <property type="term" value="P:regulation of DNA repair"/>
    <property type="evidence" value="ECO:0007669"/>
    <property type="project" value="InterPro"/>
</dbReference>
<dbReference type="InterPro" id="IPR046372">
    <property type="entry name" value="PARG_cat_C"/>
</dbReference>
<dbReference type="InterPro" id="IPR048362">
    <property type="entry name" value="PARG_helical"/>
</dbReference>
<dbReference type="InterPro" id="IPR007724">
    <property type="entry name" value="Poly_GlycHdrlase"/>
</dbReference>
<dbReference type="PANTHER" id="PTHR12837">
    <property type="entry name" value="POLY ADP-RIBOSE GLYCOHYDROLASE"/>
    <property type="match status" value="1"/>
</dbReference>
<dbReference type="PANTHER" id="PTHR12837:SF15">
    <property type="entry name" value="POLY(ADP-RIBOSE) GLYCOHYDROLASE"/>
    <property type="match status" value="1"/>
</dbReference>
<dbReference type="Pfam" id="PF05028">
    <property type="entry name" value="PARG_cat_C"/>
    <property type="match status" value="1"/>
</dbReference>
<dbReference type="Pfam" id="PF20811">
    <property type="entry name" value="PARG_cat_N"/>
    <property type="match status" value="1"/>
</dbReference>
<protein>
    <recommendedName>
        <fullName evidence="4">Poly(ADP-ribose) glycohydrolase</fullName>
        <ecNumber evidence="1">3.2.1.143</ecNumber>
    </recommendedName>
</protein>
<accession>O88622</accession>
<accession>Q80YQ6</accession>
<accession>Q8CB72</accession>
<evidence type="ECO:0000250" key="1">
    <source>
        <dbReference type="UniProtKB" id="Q86W56"/>
    </source>
</evidence>
<evidence type="ECO:0000250" key="2">
    <source>
        <dbReference type="UniProtKB" id="Q9QYM2"/>
    </source>
</evidence>
<evidence type="ECO:0000256" key="3">
    <source>
        <dbReference type="SAM" id="MobiDB-lite"/>
    </source>
</evidence>
<evidence type="ECO:0000303" key="4">
    <source>
    </source>
</evidence>
<evidence type="ECO:0000303" key="5">
    <source>
    </source>
</evidence>
<evidence type="ECO:0000305" key="6"/>
<evidence type="ECO:0000312" key="7">
    <source>
        <dbReference type="MGI" id="MGI:1347094"/>
    </source>
</evidence>
<evidence type="ECO:0007744" key="8">
    <source>
    </source>
</evidence>
<evidence type="ECO:0007744" key="9">
    <source>
    </source>
</evidence>
<evidence type="ECO:0007744" key="10">
    <source>
    </source>
</evidence>
<evidence type="ECO:0007744" key="11">
    <source>
    </source>
</evidence>
<evidence type="ECO:0007829" key="12">
    <source>
        <dbReference type="PDB" id="4FC2"/>
    </source>
</evidence>
<evidence type="ECO:0007829" key="13">
    <source>
        <dbReference type="PDB" id="4N9Y"/>
    </source>
</evidence>
<evidence type="ECO:0007829" key="14">
    <source>
        <dbReference type="PDB" id="4N9Z"/>
    </source>
</evidence>
<evidence type="ECO:0007829" key="15">
    <source>
        <dbReference type="PDB" id="4NA0"/>
    </source>
</evidence>
<evidence type="ECO:0007829" key="16">
    <source>
        <dbReference type="PDB" id="4NA4"/>
    </source>
</evidence>
<feature type="chain" id="PRO_0000066603" description="Poly(ADP-ribose) glycohydrolase">
    <location>
        <begin position="1"/>
        <end position="969"/>
    </location>
</feature>
<feature type="region of interest" description="A-domain" evidence="1">
    <location>
        <begin position="1"/>
        <end position="449"/>
    </location>
</feature>
<feature type="region of interest" description="Disordered" evidence="3">
    <location>
        <begin position="1"/>
        <end position="149"/>
    </location>
</feature>
<feature type="region of interest" description="Disordered" evidence="3">
    <location>
        <begin position="161"/>
        <end position="341"/>
    </location>
</feature>
<feature type="region of interest" description="Disordered" evidence="3">
    <location>
        <begin position="368"/>
        <end position="400"/>
    </location>
</feature>
<feature type="region of interest" description="Catalytic" evidence="1">
    <location>
        <begin position="603"/>
        <end position="788"/>
    </location>
</feature>
<feature type="short sequence motif" description="Nuclear localization signal" evidence="1">
    <location>
        <begin position="10"/>
        <end position="16"/>
    </location>
</feature>
<feature type="short sequence motif" description="PIP-box (PCNA interacting peptide)" evidence="1">
    <location>
        <begin position="77"/>
        <end position="84"/>
    </location>
</feature>
<feature type="compositionally biased region" description="Polar residues" evidence="3">
    <location>
        <begin position="69"/>
        <end position="84"/>
    </location>
</feature>
<feature type="compositionally biased region" description="Basic and acidic residues" evidence="3">
    <location>
        <begin position="87"/>
        <end position="100"/>
    </location>
</feature>
<feature type="compositionally biased region" description="Polar residues" evidence="3">
    <location>
        <begin position="101"/>
        <end position="113"/>
    </location>
</feature>
<feature type="compositionally biased region" description="Basic and acidic residues" evidence="3">
    <location>
        <begin position="116"/>
        <end position="125"/>
    </location>
</feature>
<feature type="compositionally biased region" description="Polar residues" evidence="3">
    <location>
        <begin position="128"/>
        <end position="149"/>
    </location>
</feature>
<feature type="compositionally biased region" description="Polar residues" evidence="3">
    <location>
        <begin position="179"/>
        <end position="189"/>
    </location>
</feature>
<feature type="compositionally biased region" description="Basic and acidic residues" evidence="3">
    <location>
        <begin position="190"/>
        <end position="205"/>
    </location>
</feature>
<feature type="compositionally biased region" description="Polar residues" evidence="3">
    <location>
        <begin position="226"/>
        <end position="237"/>
    </location>
</feature>
<feature type="compositionally biased region" description="Polar residues" evidence="3">
    <location>
        <begin position="275"/>
        <end position="284"/>
    </location>
</feature>
<feature type="compositionally biased region" description="Acidic residues" evidence="3">
    <location>
        <begin position="311"/>
        <end position="325"/>
    </location>
</feature>
<feature type="compositionally biased region" description="Polar residues" evidence="3">
    <location>
        <begin position="329"/>
        <end position="339"/>
    </location>
</feature>
<feature type="compositionally biased region" description="Polar residues" evidence="3">
    <location>
        <begin position="369"/>
        <end position="387"/>
    </location>
</feature>
<feature type="active site" evidence="1">
    <location>
        <position position="730"/>
    </location>
</feature>
<feature type="active site" evidence="1">
    <location>
        <position position="748"/>
    </location>
</feature>
<feature type="active site" evidence="1">
    <location>
        <position position="749"/>
    </location>
</feature>
<feature type="binding site" evidence="1">
    <location>
        <begin position="719"/>
        <end position="720"/>
    </location>
    <ligand>
        <name>substrate</name>
    </ligand>
</feature>
<feature type="binding site" evidence="1">
    <location>
        <position position="733"/>
    </location>
    <ligand>
        <name>substrate</name>
    </ligand>
</feature>
<feature type="binding site" evidence="1">
    <location>
        <position position="747"/>
    </location>
    <ligand>
        <name>substrate</name>
    </ligand>
</feature>
<feature type="binding site" evidence="2">
    <location>
        <position position="788"/>
    </location>
    <ligand>
        <name>substrate</name>
    </ligand>
</feature>
<feature type="binding site" evidence="1">
    <location>
        <begin position="862"/>
        <end position="867"/>
    </location>
    <ligand>
        <name>substrate</name>
    </ligand>
</feature>
<feature type="modified residue" description="Phosphoserine" evidence="10">
    <location>
        <position position="135"/>
    </location>
</feature>
<feature type="modified residue" description="Phosphothreonine" evidence="10">
    <location>
        <position position="137"/>
    </location>
</feature>
<feature type="modified residue" description="Phosphoserine" evidence="1">
    <location>
        <position position="195"/>
    </location>
</feature>
<feature type="modified residue" description="Phosphothreonine" evidence="1">
    <location>
        <position position="197"/>
    </location>
</feature>
<feature type="modified residue" description="Phosphoserine" evidence="8 10">
    <location>
        <position position="256"/>
    </location>
</feature>
<feature type="modified residue" description="Phosphoserine" evidence="8 10">
    <location>
        <position position="259"/>
    </location>
</feature>
<feature type="modified residue" description="Phosphoserine" evidence="1">
    <location>
        <position position="281"/>
    </location>
</feature>
<feature type="modified residue" description="Phosphoserine" evidence="9 10">
    <location>
        <position position="286"/>
    </location>
</feature>
<feature type="modified residue" description="Phosphoserine" evidence="10">
    <location>
        <position position="293"/>
    </location>
</feature>
<feature type="modified residue" description="Phosphoserine" evidence="10">
    <location>
        <position position="297"/>
    </location>
</feature>
<feature type="modified residue" description="Phosphoserine" evidence="1">
    <location>
        <position position="311"/>
    </location>
</feature>
<feature type="modified residue" description="N6-acetyllysine" evidence="11">
    <location>
        <position position="334"/>
    </location>
</feature>
<feature type="splice variant" id="VSP_011771" description="In isoform 2." evidence="5">
    <original>K</original>
    <variation>E</variation>
    <location>
        <position position="920"/>
    </location>
</feature>
<feature type="splice variant" id="VSP_011772" description="In isoform 2." evidence="5">
    <location>
        <begin position="921"/>
        <end position="969"/>
    </location>
</feature>
<feature type="sequence conflict" description="In Ref. 1; AAC28735." evidence="6" ref="1">
    <original>RP</original>
    <variation>A</variation>
    <location>
        <begin position="13"/>
        <end position="14"/>
    </location>
</feature>
<feature type="sequence conflict" description="In Ref. 1; AAC28735." evidence="6" ref="1">
    <original>K</original>
    <variation>R</variation>
    <location>
        <position position="305"/>
    </location>
</feature>
<feature type="sequence conflict" description="In Ref. 3; BC050892/BC059827." evidence="6" ref="3">
    <original>A</original>
    <variation>V</variation>
    <location>
        <position position="370"/>
    </location>
</feature>
<feature type="sequence conflict" description="In Ref. 2; BAC29519." evidence="6" ref="2">
    <original>A</original>
    <variation>V</variation>
    <location>
        <position position="872"/>
    </location>
</feature>
<feature type="strand" evidence="14">
    <location>
        <begin position="445"/>
        <end position="449"/>
    </location>
</feature>
<feature type="helix" evidence="14">
    <location>
        <begin position="451"/>
        <end position="453"/>
    </location>
</feature>
<feature type="turn" evidence="14">
    <location>
        <begin position="457"/>
        <end position="460"/>
    </location>
</feature>
<feature type="strand" evidence="14">
    <location>
        <begin position="473"/>
        <end position="475"/>
    </location>
</feature>
<feature type="turn" evidence="14">
    <location>
        <begin position="479"/>
        <end position="481"/>
    </location>
</feature>
<feature type="strand" evidence="14">
    <location>
        <begin position="490"/>
        <end position="494"/>
    </location>
</feature>
<feature type="strand" evidence="15">
    <location>
        <begin position="500"/>
        <end position="503"/>
    </location>
</feature>
<feature type="strand" evidence="14">
    <location>
        <begin position="513"/>
        <end position="515"/>
    </location>
</feature>
<feature type="strand" evidence="14">
    <location>
        <begin position="525"/>
        <end position="527"/>
    </location>
</feature>
<feature type="helix" evidence="14">
    <location>
        <begin position="528"/>
        <end position="536"/>
    </location>
</feature>
<feature type="helix" evidence="14">
    <location>
        <begin position="543"/>
        <end position="552"/>
    </location>
</feature>
<feature type="helix" evidence="14">
    <location>
        <begin position="555"/>
        <end position="557"/>
    </location>
</feature>
<feature type="turn" evidence="14">
    <location>
        <begin position="558"/>
        <end position="560"/>
    </location>
</feature>
<feature type="helix" evidence="14">
    <location>
        <begin position="564"/>
        <end position="571"/>
    </location>
</feature>
<feature type="helix" evidence="14">
    <location>
        <begin position="576"/>
        <end position="584"/>
    </location>
</feature>
<feature type="helix" evidence="14">
    <location>
        <begin position="586"/>
        <end position="595"/>
    </location>
</feature>
<feature type="helix" evidence="14">
    <location>
        <begin position="597"/>
        <end position="600"/>
    </location>
</feature>
<feature type="strand" evidence="14">
    <location>
        <begin position="614"/>
        <end position="619"/>
    </location>
</feature>
<feature type="helix" evidence="14">
    <location>
        <begin position="620"/>
        <end position="631"/>
    </location>
</feature>
<feature type="turn" evidence="14">
    <location>
        <begin position="645"/>
        <end position="648"/>
    </location>
</feature>
<feature type="helix" evidence="14">
    <location>
        <begin position="655"/>
        <end position="658"/>
    </location>
</feature>
<feature type="strand" evidence="13">
    <location>
        <begin position="659"/>
        <end position="661"/>
    </location>
</feature>
<feature type="helix" evidence="14">
    <location>
        <begin position="664"/>
        <end position="681"/>
    </location>
</feature>
<feature type="strand" evidence="14">
    <location>
        <begin position="687"/>
        <end position="694"/>
    </location>
</feature>
<feature type="turn" evidence="14">
    <location>
        <begin position="701"/>
        <end position="703"/>
    </location>
</feature>
<feature type="strand" evidence="14">
    <location>
        <begin position="711"/>
        <end position="717"/>
    </location>
</feature>
<feature type="helix" evidence="14">
    <location>
        <begin position="719"/>
        <end position="722"/>
    </location>
</feature>
<feature type="turn" evidence="14">
    <location>
        <begin position="723"/>
        <end position="725"/>
    </location>
</feature>
<feature type="strand" evidence="14">
    <location>
        <begin position="726"/>
        <end position="732"/>
    </location>
</feature>
<feature type="turn" evidence="12">
    <location>
        <begin position="736"/>
        <end position="743"/>
    </location>
</feature>
<feature type="helix" evidence="14">
    <location>
        <begin position="747"/>
        <end position="754"/>
    </location>
</feature>
<feature type="helix" evidence="14">
    <location>
        <begin position="756"/>
        <end position="760"/>
    </location>
</feature>
<feature type="helix" evidence="14">
    <location>
        <begin position="761"/>
        <end position="764"/>
    </location>
</feature>
<feature type="strand" evidence="14">
    <location>
        <begin position="772"/>
        <end position="777"/>
    </location>
</feature>
<feature type="strand" evidence="14">
    <location>
        <begin position="783"/>
        <end position="787"/>
    </location>
</feature>
<feature type="helix" evidence="14">
    <location>
        <begin position="789"/>
        <end position="791"/>
    </location>
</feature>
<feature type="strand" evidence="14">
    <location>
        <begin position="793"/>
        <end position="797"/>
    </location>
</feature>
<feature type="strand" evidence="16">
    <location>
        <begin position="808"/>
        <end position="811"/>
    </location>
</feature>
<feature type="strand" evidence="14">
    <location>
        <begin position="813"/>
        <end position="818"/>
    </location>
</feature>
<feature type="helix" evidence="14">
    <location>
        <begin position="825"/>
        <end position="829"/>
    </location>
</feature>
<feature type="helix" evidence="14">
    <location>
        <begin position="831"/>
        <end position="845"/>
    </location>
</feature>
<feature type="helix" evidence="14">
    <location>
        <begin position="852"/>
        <end position="854"/>
    </location>
</feature>
<feature type="strand" evidence="14">
    <location>
        <begin position="858"/>
        <end position="861"/>
    </location>
</feature>
<feature type="helix" evidence="14">
    <location>
        <begin position="866"/>
        <end position="868"/>
    </location>
</feature>
<feature type="helix" evidence="14">
    <location>
        <begin position="872"/>
        <end position="885"/>
    </location>
</feature>
<feature type="strand" evidence="14">
    <location>
        <begin position="890"/>
        <end position="893"/>
    </location>
</feature>
<feature type="helix" evidence="14">
    <location>
        <begin position="898"/>
        <end position="913"/>
    </location>
</feature>
<feature type="helix" evidence="14">
    <location>
        <begin position="918"/>
        <end position="932"/>
    </location>
</feature>
<feature type="turn" evidence="14">
    <location>
        <begin position="933"/>
        <end position="935"/>
    </location>
</feature>
<feature type="strand" evidence="14">
    <location>
        <begin position="938"/>
        <end position="940"/>
    </location>
</feature>
<feature type="helix" evidence="14">
    <location>
        <begin position="945"/>
        <end position="955"/>
    </location>
</feature>
<reference key="1">
    <citation type="journal article" date="1999" name="Cytogenet. Cell Genet.">
        <title>Assignment of the poly(ADP-ribose) glycohydrolase gene (PARG) to human chromosome 10q11.23 and mouse chromosome 14B by in situ hybridization.</title>
        <authorList>
            <person name="Ame J.-C."/>
            <person name="Apiou F."/>
            <person name="Jacobson E.L."/>
            <person name="Jacobson M.K."/>
        </authorList>
    </citation>
    <scope>NUCLEOTIDE SEQUENCE [MRNA] (ISOFORM 1)</scope>
</reference>
<reference key="2">
    <citation type="journal article" date="2005" name="Science">
        <title>The transcriptional landscape of the mammalian genome.</title>
        <authorList>
            <person name="Carninci P."/>
            <person name="Kasukawa T."/>
            <person name="Katayama S."/>
            <person name="Gough J."/>
            <person name="Frith M.C."/>
            <person name="Maeda N."/>
            <person name="Oyama R."/>
            <person name="Ravasi T."/>
            <person name="Lenhard B."/>
            <person name="Wells C."/>
            <person name="Kodzius R."/>
            <person name="Shimokawa K."/>
            <person name="Bajic V.B."/>
            <person name="Brenner S.E."/>
            <person name="Batalov S."/>
            <person name="Forrest A.R."/>
            <person name="Zavolan M."/>
            <person name="Davis M.J."/>
            <person name="Wilming L.G."/>
            <person name="Aidinis V."/>
            <person name="Allen J.E."/>
            <person name="Ambesi-Impiombato A."/>
            <person name="Apweiler R."/>
            <person name="Aturaliya R.N."/>
            <person name="Bailey T.L."/>
            <person name="Bansal M."/>
            <person name="Baxter L."/>
            <person name="Beisel K.W."/>
            <person name="Bersano T."/>
            <person name="Bono H."/>
            <person name="Chalk A.M."/>
            <person name="Chiu K.P."/>
            <person name="Choudhary V."/>
            <person name="Christoffels A."/>
            <person name="Clutterbuck D.R."/>
            <person name="Crowe M.L."/>
            <person name="Dalla E."/>
            <person name="Dalrymple B.P."/>
            <person name="de Bono B."/>
            <person name="Della Gatta G."/>
            <person name="di Bernardo D."/>
            <person name="Down T."/>
            <person name="Engstrom P."/>
            <person name="Fagiolini M."/>
            <person name="Faulkner G."/>
            <person name="Fletcher C.F."/>
            <person name="Fukushima T."/>
            <person name="Furuno M."/>
            <person name="Futaki S."/>
            <person name="Gariboldi M."/>
            <person name="Georgii-Hemming P."/>
            <person name="Gingeras T.R."/>
            <person name="Gojobori T."/>
            <person name="Green R.E."/>
            <person name="Gustincich S."/>
            <person name="Harbers M."/>
            <person name="Hayashi Y."/>
            <person name="Hensch T.K."/>
            <person name="Hirokawa N."/>
            <person name="Hill D."/>
            <person name="Huminiecki L."/>
            <person name="Iacono M."/>
            <person name="Ikeo K."/>
            <person name="Iwama A."/>
            <person name="Ishikawa T."/>
            <person name="Jakt M."/>
            <person name="Kanapin A."/>
            <person name="Katoh M."/>
            <person name="Kawasawa Y."/>
            <person name="Kelso J."/>
            <person name="Kitamura H."/>
            <person name="Kitano H."/>
            <person name="Kollias G."/>
            <person name="Krishnan S.P."/>
            <person name="Kruger A."/>
            <person name="Kummerfeld S.K."/>
            <person name="Kurochkin I.V."/>
            <person name="Lareau L.F."/>
            <person name="Lazarevic D."/>
            <person name="Lipovich L."/>
            <person name="Liu J."/>
            <person name="Liuni S."/>
            <person name="McWilliam S."/>
            <person name="Madan Babu M."/>
            <person name="Madera M."/>
            <person name="Marchionni L."/>
            <person name="Matsuda H."/>
            <person name="Matsuzawa S."/>
            <person name="Miki H."/>
            <person name="Mignone F."/>
            <person name="Miyake S."/>
            <person name="Morris K."/>
            <person name="Mottagui-Tabar S."/>
            <person name="Mulder N."/>
            <person name="Nakano N."/>
            <person name="Nakauchi H."/>
            <person name="Ng P."/>
            <person name="Nilsson R."/>
            <person name="Nishiguchi S."/>
            <person name="Nishikawa S."/>
            <person name="Nori F."/>
            <person name="Ohara O."/>
            <person name="Okazaki Y."/>
            <person name="Orlando V."/>
            <person name="Pang K.C."/>
            <person name="Pavan W.J."/>
            <person name="Pavesi G."/>
            <person name="Pesole G."/>
            <person name="Petrovsky N."/>
            <person name="Piazza S."/>
            <person name="Reed J."/>
            <person name="Reid J.F."/>
            <person name="Ring B.Z."/>
            <person name="Ringwald M."/>
            <person name="Rost B."/>
            <person name="Ruan Y."/>
            <person name="Salzberg S.L."/>
            <person name="Sandelin A."/>
            <person name="Schneider C."/>
            <person name="Schoenbach C."/>
            <person name="Sekiguchi K."/>
            <person name="Semple C.A."/>
            <person name="Seno S."/>
            <person name="Sessa L."/>
            <person name="Sheng Y."/>
            <person name="Shibata Y."/>
            <person name="Shimada H."/>
            <person name="Shimada K."/>
            <person name="Silva D."/>
            <person name="Sinclair B."/>
            <person name="Sperling S."/>
            <person name="Stupka E."/>
            <person name="Sugiura K."/>
            <person name="Sultana R."/>
            <person name="Takenaka Y."/>
            <person name="Taki K."/>
            <person name="Tammoja K."/>
            <person name="Tan S.L."/>
            <person name="Tang S."/>
            <person name="Taylor M.S."/>
            <person name="Tegner J."/>
            <person name="Teichmann S.A."/>
            <person name="Ueda H.R."/>
            <person name="van Nimwegen E."/>
            <person name="Verardo R."/>
            <person name="Wei C.L."/>
            <person name="Yagi K."/>
            <person name="Yamanishi H."/>
            <person name="Zabarovsky E."/>
            <person name="Zhu S."/>
            <person name="Zimmer A."/>
            <person name="Hide W."/>
            <person name="Bult C."/>
            <person name="Grimmond S.M."/>
            <person name="Teasdale R.D."/>
            <person name="Liu E.T."/>
            <person name="Brusic V."/>
            <person name="Quackenbush J."/>
            <person name="Wahlestedt C."/>
            <person name="Mattick J.S."/>
            <person name="Hume D.A."/>
            <person name="Kai C."/>
            <person name="Sasaki D."/>
            <person name="Tomaru Y."/>
            <person name="Fukuda S."/>
            <person name="Kanamori-Katayama M."/>
            <person name="Suzuki M."/>
            <person name="Aoki J."/>
            <person name="Arakawa T."/>
            <person name="Iida J."/>
            <person name="Imamura K."/>
            <person name="Itoh M."/>
            <person name="Kato T."/>
            <person name="Kawaji H."/>
            <person name="Kawagashira N."/>
            <person name="Kawashima T."/>
            <person name="Kojima M."/>
            <person name="Kondo S."/>
            <person name="Konno H."/>
            <person name="Nakano K."/>
            <person name="Ninomiya N."/>
            <person name="Nishio T."/>
            <person name="Okada M."/>
            <person name="Plessy C."/>
            <person name="Shibata K."/>
            <person name="Shiraki T."/>
            <person name="Suzuki S."/>
            <person name="Tagami M."/>
            <person name="Waki K."/>
            <person name="Watahiki A."/>
            <person name="Okamura-Oho Y."/>
            <person name="Suzuki H."/>
            <person name="Kawai J."/>
            <person name="Hayashizaki Y."/>
        </authorList>
    </citation>
    <scope>NUCLEOTIDE SEQUENCE [LARGE SCALE MRNA] (ISOFORM 2)</scope>
    <source>
        <strain>C57BL/6J</strain>
        <tissue>Bone</tissue>
    </source>
</reference>
<reference key="3">
    <citation type="journal article" date="2004" name="Genome Res.">
        <title>The status, quality, and expansion of the NIH full-length cDNA project: the Mammalian Gene Collection (MGC).</title>
        <authorList>
            <consortium name="The MGC Project Team"/>
        </authorList>
    </citation>
    <scope>NUCLEOTIDE SEQUENCE [LARGE SCALE MRNA] (ISOFORM 1)</scope>
    <source>
        <strain>C57BL/6J</strain>
        <tissue>Brain</tissue>
    </source>
</reference>
<reference key="4">
    <citation type="journal article" date="2007" name="Proc. Natl. Acad. Sci. U.S.A.">
        <title>Large-scale phosphorylation analysis of mouse liver.</title>
        <authorList>
            <person name="Villen J."/>
            <person name="Beausoleil S.A."/>
            <person name="Gerber S.A."/>
            <person name="Gygi S.P."/>
        </authorList>
    </citation>
    <scope>PHOSPHORYLATION [LARGE SCALE ANALYSIS] AT SER-256 AND SER-259</scope>
    <scope>IDENTIFICATION BY MASS SPECTROMETRY [LARGE SCALE ANALYSIS]</scope>
    <source>
        <tissue>Liver</tissue>
    </source>
</reference>
<reference key="5">
    <citation type="journal article" date="2009" name="Immunity">
        <title>The phagosomal proteome in interferon-gamma-activated macrophages.</title>
        <authorList>
            <person name="Trost M."/>
            <person name="English L."/>
            <person name="Lemieux S."/>
            <person name="Courcelles M."/>
            <person name="Desjardins M."/>
            <person name="Thibault P."/>
        </authorList>
    </citation>
    <scope>PHOSPHORYLATION [LARGE SCALE ANALYSIS] AT SER-286</scope>
    <scope>IDENTIFICATION BY MASS SPECTROMETRY [LARGE SCALE ANALYSIS]</scope>
</reference>
<reference key="6">
    <citation type="journal article" date="2010" name="Cell">
        <title>A tissue-specific atlas of mouse protein phosphorylation and expression.</title>
        <authorList>
            <person name="Huttlin E.L."/>
            <person name="Jedrychowski M.P."/>
            <person name="Elias J.E."/>
            <person name="Goswami T."/>
            <person name="Rad R."/>
            <person name="Beausoleil S.A."/>
            <person name="Villen J."/>
            <person name="Haas W."/>
            <person name="Sowa M.E."/>
            <person name="Gygi S.P."/>
        </authorList>
    </citation>
    <scope>PHOSPHORYLATION [LARGE SCALE ANALYSIS] AT SER-135; THR-137; SER-256; SER-259; SER-286; SER-293 AND SER-297</scope>
    <scope>IDENTIFICATION BY MASS SPECTROMETRY [LARGE SCALE ANALYSIS]</scope>
    <source>
        <tissue>Heart</tissue>
        <tissue>Kidney</tissue>
        <tissue>Lung</tissue>
        <tissue>Spleen</tissue>
        <tissue>Testis</tissue>
    </source>
</reference>
<reference key="7">
    <citation type="journal article" date="2013" name="Mol. Cell">
        <title>SIRT5-mediated lysine desuccinylation impacts diverse metabolic pathways.</title>
        <authorList>
            <person name="Park J."/>
            <person name="Chen Y."/>
            <person name="Tishkoff D.X."/>
            <person name="Peng C."/>
            <person name="Tan M."/>
            <person name="Dai L."/>
            <person name="Xie Z."/>
            <person name="Zhang Y."/>
            <person name="Zwaans B.M."/>
            <person name="Skinner M.E."/>
            <person name="Lombard D.B."/>
            <person name="Zhao Y."/>
        </authorList>
    </citation>
    <scope>ACETYLATION [LARGE SCALE ANALYSIS] AT LYS-334</scope>
    <scope>IDENTIFICATION BY MASS SPECTROMETRY [LARGE SCALE ANALYSIS]</scope>
    <source>
        <tissue>Embryonic fibroblast</tissue>
    </source>
</reference>
<keyword id="KW-0002">3D-structure</keyword>
<keyword id="KW-0007">Acetylation</keyword>
<keyword id="KW-0025">Alternative splicing</keyword>
<keyword id="KW-0227">DNA damage</keyword>
<keyword id="KW-0378">Hydrolase</keyword>
<keyword id="KW-0539">Nucleus</keyword>
<keyword id="KW-0597">Phosphoprotein</keyword>
<keyword id="KW-1185">Reference proteome</keyword>
<organism>
    <name type="scientific">Mus musculus</name>
    <name type="common">Mouse</name>
    <dbReference type="NCBI Taxonomy" id="10090"/>
    <lineage>
        <taxon>Eukaryota</taxon>
        <taxon>Metazoa</taxon>
        <taxon>Chordata</taxon>
        <taxon>Craniata</taxon>
        <taxon>Vertebrata</taxon>
        <taxon>Euteleostomi</taxon>
        <taxon>Mammalia</taxon>
        <taxon>Eutheria</taxon>
        <taxon>Euarchontoglires</taxon>
        <taxon>Glires</taxon>
        <taxon>Rodentia</taxon>
        <taxon>Myomorpha</taxon>
        <taxon>Muroidea</taxon>
        <taxon>Muridae</taxon>
        <taxon>Murinae</taxon>
        <taxon>Mus</taxon>
        <taxon>Mus</taxon>
    </lineage>
</organism>